<keyword id="KW-0249">Electron transport</keyword>
<keyword id="KW-0472">Membrane</keyword>
<keyword id="KW-0934">Plastid</keyword>
<keyword id="KW-0812">Transmembrane</keyword>
<keyword id="KW-1133">Transmembrane helix</keyword>
<keyword id="KW-0813">Transport</keyword>
<accession>B0YPL7</accession>
<evidence type="ECO:0000250" key="1"/>
<evidence type="ECO:0000255" key="2">
    <source>
        <dbReference type="HAMAP-Rule" id="MF_00395"/>
    </source>
</evidence>
<evidence type="ECO:0000305" key="3"/>
<dbReference type="EMBL" id="EU043314">
    <property type="protein sequence ID" value="ABS54464.1"/>
    <property type="molecule type" value="Genomic_DNA"/>
</dbReference>
<dbReference type="RefSeq" id="YP_001687203.1">
    <property type="nucleotide sequence ID" value="NC_010359.1"/>
</dbReference>
<dbReference type="SMR" id="B0YPL7"/>
<dbReference type="GeneID" id="5952146"/>
<dbReference type="GO" id="GO:0009512">
    <property type="term" value="C:cytochrome b6f complex"/>
    <property type="evidence" value="ECO:0007669"/>
    <property type="project" value="InterPro"/>
</dbReference>
<dbReference type="GO" id="GO:0042170">
    <property type="term" value="C:plastid membrane"/>
    <property type="evidence" value="ECO:0007669"/>
    <property type="project" value="UniProtKB-SubCell"/>
</dbReference>
<dbReference type="GO" id="GO:0042651">
    <property type="term" value="C:thylakoid membrane"/>
    <property type="evidence" value="ECO:0007669"/>
    <property type="project" value="UniProtKB-UniRule"/>
</dbReference>
<dbReference type="GO" id="GO:0045158">
    <property type="term" value="F:electron transporter, transferring electrons within cytochrome b6/f complex of photosystem II activity"/>
    <property type="evidence" value="ECO:0007669"/>
    <property type="project" value="InterPro"/>
</dbReference>
<dbReference type="GO" id="GO:0017004">
    <property type="term" value="P:cytochrome complex assembly"/>
    <property type="evidence" value="ECO:0007669"/>
    <property type="project" value="UniProtKB-UniRule"/>
</dbReference>
<dbReference type="HAMAP" id="MF_00395">
    <property type="entry name" value="Cytb6_f_PetN"/>
    <property type="match status" value="1"/>
</dbReference>
<dbReference type="InterPro" id="IPR036143">
    <property type="entry name" value="Cytochr_b6-f_cplx_su8_sf"/>
</dbReference>
<dbReference type="InterPro" id="IPR005497">
    <property type="entry name" value="Cytochrome_b6-f_cplx_su8"/>
</dbReference>
<dbReference type="Pfam" id="PF03742">
    <property type="entry name" value="PetN"/>
    <property type="match status" value="1"/>
</dbReference>
<dbReference type="SUPFAM" id="SSF103451">
    <property type="entry name" value="PetN subunit of the cytochrome b6f complex"/>
    <property type="match status" value="1"/>
</dbReference>
<proteinExistence type="inferred from homology"/>
<organism>
    <name type="scientific">Aneura mirabilis</name>
    <name type="common">Parasitic liverwort</name>
    <name type="synonym">Cryptothallus mirabilis</name>
    <dbReference type="NCBI Taxonomy" id="280810"/>
    <lineage>
        <taxon>Eukaryota</taxon>
        <taxon>Viridiplantae</taxon>
        <taxon>Streptophyta</taxon>
        <taxon>Embryophyta</taxon>
        <taxon>Marchantiophyta</taxon>
        <taxon>Jungermanniopsida</taxon>
        <taxon>Metzgeriidae</taxon>
        <taxon>Metzgeriales</taxon>
        <taxon>Aneuraceae</taxon>
        <taxon>Aneura</taxon>
    </lineage>
</organism>
<feature type="chain" id="PRO_0000355419" description="Cytochrome b6-f complex subunit 8">
    <location>
        <begin position="1"/>
        <end position="29"/>
    </location>
</feature>
<feature type="transmembrane region" description="Helical" evidence="2">
    <location>
        <begin position="3"/>
        <end position="23"/>
    </location>
</feature>
<reference key="1">
    <citation type="journal article" date="2008" name="Mol. Biol. Evol.">
        <title>Functional gene losses occur with minimal size reduction in the plastid genome of the parasitic liverwort Aneura mirabilis.</title>
        <authorList>
            <person name="Wickett N.J."/>
            <person name="Zhang Y."/>
            <person name="Hansen S.K."/>
            <person name="Roper J.M."/>
            <person name="Kuehl J.V."/>
            <person name="Plock S.A."/>
            <person name="Wolf P.G."/>
            <person name="dePamphilis C.W."/>
            <person name="Boore J.L."/>
            <person name="Goffinet B."/>
        </authorList>
    </citation>
    <scope>NUCLEOTIDE SEQUENCE [LARGE SCALE GENOMIC DNA]</scope>
</reference>
<name>PETN_ANEMR</name>
<comment type="function">
    <text evidence="2">Component of the cytochrome b6-f complex, which mediates electron transfer between photosystem II (PSII) and photosystem I (PSI), cyclic electron flow around PSI, and state transitions.</text>
</comment>
<comment type="subunit">
    <text evidence="2">The 4 large subunits of the cytochrome b6-f complex are cytochrome b6, subunit IV (17 kDa polypeptide, PetD), cytochrome f and the Rieske protein, while the 4 small subunits are PetG, PetL, PetM and PetN. The complex functions as a dimer.</text>
</comment>
<comment type="subcellular location">
    <subcellularLocation>
        <location evidence="1">Plastid membrane</location>
        <topology evidence="2">Single-pass membrane protein</topology>
    </subcellularLocation>
</comment>
<comment type="similarity">
    <text evidence="2">Belongs to the PetN family.</text>
</comment>
<comment type="caution">
    <text evidence="3">This organism being non-photosynthetic, the role of this protein is uncertain.</text>
</comment>
<protein>
    <recommendedName>
        <fullName evidence="2">Cytochrome b6-f complex subunit 8</fullName>
    </recommendedName>
    <alternativeName>
        <fullName evidence="2">Cytochrome b6-f complex subunit PetN</fullName>
    </alternativeName>
    <alternativeName>
        <fullName evidence="2">Cytochrome b6-f complex subunit VIII</fullName>
    </alternativeName>
</protein>
<gene>
    <name evidence="2" type="primary">petN</name>
</gene>
<sequence length="29" mass="3158">MDITSIAWGALMVVFTFSLSLVVWGRSGL</sequence>
<geneLocation type="non-photosynthetic plastid"/>